<reference key="1">
    <citation type="journal article" date="2011" name="J. Bacteriol.">
        <title>Comparative genomics of 28 Salmonella enterica isolates: evidence for CRISPR-mediated adaptive sublineage evolution.</title>
        <authorList>
            <person name="Fricke W.F."/>
            <person name="Mammel M.K."/>
            <person name="McDermott P.F."/>
            <person name="Tartera C."/>
            <person name="White D.G."/>
            <person name="Leclerc J.E."/>
            <person name="Ravel J."/>
            <person name="Cebula T.A."/>
        </authorList>
    </citation>
    <scope>NUCLEOTIDE SEQUENCE [LARGE SCALE GENOMIC DNA]</scope>
    <source>
        <strain>CVM19633</strain>
    </source>
</reference>
<proteinExistence type="inferred from homology"/>
<comment type="function">
    <text evidence="2">With CysD forms the ATP sulfurylase (ATPS) that catalyzes the adenylation of sulfate producing adenosine 5'-phosphosulfate (APS) and diphosphate, the first enzymatic step in sulfur assimilation pathway. APS synthesis involves the formation of a high-energy phosphoric-sulfuric acid anhydride bond driven by GTP hydrolysis by CysN coupled to ATP hydrolysis by CysD.</text>
</comment>
<comment type="catalytic activity">
    <reaction evidence="2">
        <text>sulfate + ATP + H(+) = adenosine 5'-phosphosulfate + diphosphate</text>
        <dbReference type="Rhea" id="RHEA:18133"/>
        <dbReference type="ChEBI" id="CHEBI:15378"/>
        <dbReference type="ChEBI" id="CHEBI:16189"/>
        <dbReference type="ChEBI" id="CHEBI:30616"/>
        <dbReference type="ChEBI" id="CHEBI:33019"/>
        <dbReference type="ChEBI" id="CHEBI:58243"/>
        <dbReference type="EC" id="2.7.7.4"/>
    </reaction>
</comment>
<comment type="pathway">
    <text evidence="2">Sulfur metabolism; hydrogen sulfide biosynthesis; sulfite from sulfate: step 1/3.</text>
</comment>
<comment type="subunit">
    <text evidence="2">Heterodimer composed of CysD, the smaller subunit, and CysN.</text>
</comment>
<comment type="similarity">
    <text evidence="2">Belongs to the TRAFAC class translation factor GTPase superfamily. Classic translation factor GTPase family. CysN/NodQ subfamily.</text>
</comment>
<accession>B4TTW5</accession>
<keyword id="KW-0067">ATP-binding</keyword>
<keyword id="KW-0342">GTP-binding</keyword>
<keyword id="KW-0547">Nucleotide-binding</keyword>
<keyword id="KW-0548">Nucleotidyltransferase</keyword>
<keyword id="KW-0808">Transferase</keyword>
<feature type="chain" id="PRO_1000092158" description="Sulfate adenylyltransferase subunit 1">
    <location>
        <begin position="1"/>
        <end position="479"/>
    </location>
</feature>
<feature type="domain" description="tr-type G">
    <location>
        <begin position="25"/>
        <end position="239"/>
    </location>
</feature>
<feature type="region of interest" description="G1" evidence="1">
    <location>
        <begin position="34"/>
        <end position="41"/>
    </location>
</feature>
<feature type="region of interest" description="G2" evidence="1">
    <location>
        <begin position="92"/>
        <end position="96"/>
    </location>
</feature>
<feature type="region of interest" description="G3" evidence="1">
    <location>
        <begin position="113"/>
        <end position="116"/>
    </location>
</feature>
<feature type="region of interest" description="G4" evidence="1">
    <location>
        <begin position="168"/>
        <end position="171"/>
    </location>
</feature>
<feature type="region of interest" description="G5" evidence="1">
    <location>
        <begin position="206"/>
        <end position="208"/>
    </location>
</feature>
<feature type="binding site" evidence="2">
    <location>
        <begin position="34"/>
        <end position="41"/>
    </location>
    <ligand>
        <name>GTP</name>
        <dbReference type="ChEBI" id="CHEBI:37565"/>
    </ligand>
</feature>
<feature type="binding site" evidence="2">
    <location>
        <begin position="113"/>
        <end position="117"/>
    </location>
    <ligand>
        <name>GTP</name>
        <dbReference type="ChEBI" id="CHEBI:37565"/>
    </ligand>
</feature>
<feature type="binding site" evidence="2">
    <location>
        <begin position="168"/>
        <end position="171"/>
    </location>
    <ligand>
        <name>GTP</name>
        <dbReference type="ChEBI" id="CHEBI:37565"/>
    </ligand>
</feature>
<dbReference type="EC" id="2.7.7.4" evidence="2"/>
<dbReference type="EMBL" id="CP001127">
    <property type="protein sequence ID" value="ACF91863.1"/>
    <property type="molecule type" value="Genomic_DNA"/>
</dbReference>
<dbReference type="RefSeq" id="WP_001092269.1">
    <property type="nucleotide sequence ID" value="NC_011094.1"/>
</dbReference>
<dbReference type="SMR" id="B4TTW5"/>
<dbReference type="KEGG" id="sew:SeSA_A3085"/>
<dbReference type="HOGENOM" id="CLU_007265_5_2_6"/>
<dbReference type="UniPathway" id="UPA00140">
    <property type="reaction ID" value="UER00204"/>
</dbReference>
<dbReference type="Proteomes" id="UP000001865">
    <property type="component" value="Chromosome"/>
</dbReference>
<dbReference type="GO" id="GO:0005524">
    <property type="term" value="F:ATP binding"/>
    <property type="evidence" value="ECO:0007669"/>
    <property type="project" value="UniProtKB-KW"/>
</dbReference>
<dbReference type="GO" id="GO:0005525">
    <property type="term" value="F:GTP binding"/>
    <property type="evidence" value="ECO:0007669"/>
    <property type="project" value="UniProtKB-UniRule"/>
</dbReference>
<dbReference type="GO" id="GO:0003924">
    <property type="term" value="F:GTPase activity"/>
    <property type="evidence" value="ECO:0007669"/>
    <property type="project" value="InterPro"/>
</dbReference>
<dbReference type="GO" id="GO:0004781">
    <property type="term" value="F:sulfate adenylyltransferase (ATP) activity"/>
    <property type="evidence" value="ECO:0007669"/>
    <property type="project" value="UniProtKB-UniRule"/>
</dbReference>
<dbReference type="GO" id="GO:0070814">
    <property type="term" value="P:hydrogen sulfide biosynthetic process"/>
    <property type="evidence" value="ECO:0007669"/>
    <property type="project" value="UniProtKB-UniRule"/>
</dbReference>
<dbReference type="GO" id="GO:0000103">
    <property type="term" value="P:sulfate assimilation"/>
    <property type="evidence" value="ECO:0007669"/>
    <property type="project" value="UniProtKB-UniRule"/>
</dbReference>
<dbReference type="CDD" id="cd04166">
    <property type="entry name" value="CysN_ATPS"/>
    <property type="match status" value="1"/>
</dbReference>
<dbReference type="CDD" id="cd03695">
    <property type="entry name" value="CysN_NodQ_II"/>
    <property type="match status" value="1"/>
</dbReference>
<dbReference type="CDD" id="cd04095">
    <property type="entry name" value="CysN_NoDQ_III"/>
    <property type="match status" value="1"/>
</dbReference>
<dbReference type="FunFam" id="2.40.30.10:FF:000027">
    <property type="entry name" value="Sulfate adenylyltransferase subunit 1"/>
    <property type="match status" value="1"/>
</dbReference>
<dbReference type="FunFam" id="2.40.30.10:FF:000031">
    <property type="entry name" value="Sulfate adenylyltransferase subunit 1"/>
    <property type="match status" value="1"/>
</dbReference>
<dbReference type="FunFam" id="3.40.50.300:FF:000119">
    <property type="entry name" value="Sulfate adenylyltransferase subunit 1"/>
    <property type="match status" value="1"/>
</dbReference>
<dbReference type="Gene3D" id="3.40.50.300">
    <property type="entry name" value="P-loop containing nucleotide triphosphate hydrolases"/>
    <property type="match status" value="1"/>
</dbReference>
<dbReference type="Gene3D" id="2.40.30.10">
    <property type="entry name" value="Translation factors"/>
    <property type="match status" value="2"/>
</dbReference>
<dbReference type="HAMAP" id="MF_00062">
    <property type="entry name" value="Sulf_adenylyltr_sub1"/>
    <property type="match status" value="1"/>
</dbReference>
<dbReference type="InterPro" id="IPR041757">
    <property type="entry name" value="CysN_GTP-bd"/>
</dbReference>
<dbReference type="InterPro" id="IPR044138">
    <property type="entry name" value="CysN_II"/>
</dbReference>
<dbReference type="InterPro" id="IPR044139">
    <property type="entry name" value="CysN_NoDQ_III"/>
</dbReference>
<dbReference type="InterPro" id="IPR031157">
    <property type="entry name" value="G_TR_CS"/>
</dbReference>
<dbReference type="InterPro" id="IPR054696">
    <property type="entry name" value="GTP-eEF1A_C"/>
</dbReference>
<dbReference type="InterPro" id="IPR027417">
    <property type="entry name" value="P-loop_NTPase"/>
</dbReference>
<dbReference type="InterPro" id="IPR005225">
    <property type="entry name" value="Small_GTP-bd"/>
</dbReference>
<dbReference type="InterPro" id="IPR011779">
    <property type="entry name" value="SO4_adenylTrfase_lsu"/>
</dbReference>
<dbReference type="InterPro" id="IPR000795">
    <property type="entry name" value="T_Tr_GTP-bd_dom"/>
</dbReference>
<dbReference type="InterPro" id="IPR050100">
    <property type="entry name" value="TRAFAC_GTPase_members"/>
</dbReference>
<dbReference type="InterPro" id="IPR009000">
    <property type="entry name" value="Transl_B-barrel_sf"/>
</dbReference>
<dbReference type="InterPro" id="IPR009001">
    <property type="entry name" value="Transl_elong_EF1A/Init_IF2_C"/>
</dbReference>
<dbReference type="NCBIfam" id="TIGR02034">
    <property type="entry name" value="CysN"/>
    <property type="match status" value="1"/>
</dbReference>
<dbReference type="NCBIfam" id="NF003478">
    <property type="entry name" value="PRK05124.1"/>
    <property type="match status" value="1"/>
</dbReference>
<dbReference type="NCBIfam" id="TIGR00231">
    <property type="entry name" value="small_GTP"/>
    <property type="match status" value="1"/>
</dbReference>
<dbReference type="PANTHER" id="PTHR23115">
    <property type="entry name" value="TRANSLATION FACTOR"/>
    <property type="match status" value="1"/>
</dbReference>
<dbReference type="Pfam" id="PF22594">
    <property type="entry name" value="GTP-eEF1A_C"/>
    <property type="match status" value="1"/>
</dbReference>
<dbReference type="Pfam" id="PF00009">
    <property type="entry name" value="GTP_EFTU"/>
    <property type="match status" value="1"/>
</dbReference>
<dbReference type="PRINTS" id="PR00315">
    <property type="entry name" value="ELONGATNFCT"/>
</dbReference>
<dbReference type="SUPFAM" id="SSF50465">
    <property type="entry name" value="EF-Tu/eEF-1alpha/eIF2-gamma C-terminal domain"/>
    <property type="match status" value="1"/>
</dbReference>
<dbReference type="SUPFAM" id="SSF52540">
    <property type="entry name" value="P-loop containing nucleoside triphosphate hydrolases"/>
    <property type="match status" value="1"/>
</dbReference>
<dbReference type="SUPFAM" id="SSF50447">
    <property type="entry name" value="Translation proteins"/>
    <property type="match status" value="1"/>
</dbReference>
<dbReference type="PROSITE" id="PS00301">
    <property type="entry name" value="G_TR_1"/>
    <property type="match status" value="1"/>
</dbReference>
<dbReference type="PROSITE" id="PS51722">
    <property type="entry name" value="G_TR_2"/>
    <property type="match status" value="1"/>
</dbReference>
<evidence type="ECO:0000250" key="1"/>
<evidence type="ECO:0000255" key="2">
    <source>
        <dbReference type="HAMAP-Rule" id="MF_00062"/>
    </source>
</evidence>
<sequence>MNTILAQQIANEGGVEAWMMAQQHKSLLRFLTCGSVDDGKSTLIGRLLHDTLQIYEDQLSSLHNDSKRHGTQGEKLDLALLVDGLQAEREQGITIDVAYRYFSTEKRKFIIADTPGHEQYTRNMATGASTCDLAILLIDARKGVLDQTRRHSFISTLLGIKHLVVAINKMDLVDYREETFARIREDYLTFAEQLPGDLDIRFVPLSALEGDNVAAQSANMRWYSGPTLLEVLETVDIQRAVDRQPMRFPVQYVNRPNLDFRGYAGTLASGSVKVGERIKVLPSGVESSVARIVTFDGDKEEACAGEAITLVLNDDIDISRGDLLLAANETLAPARHAAIDVVWMAEQPLAPGQSYDVKLAGKKTRARIEAIRYQIDINNLTQRDVESLPLNGIGLVEMTFDEPLALDIYQQNPVTGGLIFIDRLSNVTVGAGMVRELDERGATPPVEYSAFELELNALVRRHFPHWDARDLLGDKHGAA</sequence>
<name>CYSN_SALSV</name>
<protein>
    <recommendedName>
        <fullName evidence="2">Sulfate adenylyltransferase subunit 1</fullName>
        <ecNumber evidence="2">2.7.7.4</ecNumber>
    </recommendedName>
    <alternativeName>
        <fullName evidence="2">ATP-sulfurylase large subunit</fullName>
    </alternativeName>
    <alternativeName>
        <fullName evidence="2">Sulfate adenylate transferase</fullName>
        <shortName evidence="2">SAT</shortName>
    </alternativeName>
</protein>
<gene>
    <name evidence="2" type="primary">cysN</name>
    <name type="ordered locus">SeSA_A3085</name>
</gene>
<organism>
    <name type="scientific">Salmonella schwarzengrund (strain CVM19633)</name>
    <dbReference type="NCBI Taxonomy" id="439843"/>
    <lineage>
        <taxon>Bacteria</taxon>
        <taxon>Pseudomonadati</taxon>
        <taxon>Pseudomonadota</taxon>
        <taxon>Gammaproteobacteria</taxon>
        <taxon>Enterobacterales</taxon>
        <taxon>Enterobacteriaceae</taxon>
        <taxon>Salmonella</taxon>
    </lineage>
</organism>